<keyword id="KW-1015">Disulfide bond</keyword>
<keyword id="KW-0872">Ion channel impairing toxin</keyword>
<keyword id="KW-0528">Neurotoxin</keyword>
<keyword id="KW-0964">Secreted</keyword>
<keyword id="KW-0800">Toxin</keyword>
<keyword id="KW-0738">Voltage-gated sodium channel impairing toxin</keyword>
<name>I1B1_CONRA</name>
<dbReference type="EMBL" id="AY208947">
    <property type="protein sequence ID" value="AAP41529.1"/>
    <property type="molecule type" value="mRNA"/>
</dbReference>
<dbReference type="SMR" id="Q7Z0A6"/>
<dbReference type="ConoServer" id="828">
    <property type="toxin name" value="R11.1"/>
</dbReference>
<dbReference type="GO" id="GO:0005576">
    <property type="term" value="C:extracellular region"/>
    <property type="evidence" value="ECO:0007669"/>
    <property type="project" value="UniProtKB-SubCell"/>
</dbReference>
<dbReference type="GO" id="GO:0017080">
    <property type="term" value="F:sodium channel regulator activity"/>
    <property type="evidence" value="ECO:0007669"/>
    <property type="project" value="UniProtKB-KW"/>
</dbReference>
<dbReference type="GO" id="GO:0090729">
    <property type="term" value="F:toxin activity"/>
    <property type="evidence" value="ECO:0007669"/>
    <property type="project" value="UniProtKB-KW"/>
</dbReference>
<dbReference type="Gene3D" id="4.10.40.80">
    <property type="match status" value="1"/>
</dbReference>
<dbReference type="InterPro" id="IPR013141">
    <property type="entry name" value="Conotoxin-I_CS"/>
</dbReference>
<dbReference type="InterPro" id="IPR012624">
    <property type="entry name" value="Toxin_19"/>
</dbReference>
<dbReference type="Pfam" id="PF08088">
    <property type="entry name" value="Toxin_19"/>
    <property type="match status" value="1"/>
</dbReference>
<dbReference type="PROSITE" id="PS60019">
    <property type="entry name" value="I_CONOTOXIN"/>
    <property type="match status" value="1"/>
</dbReference>
<organism>
    <name type="scientific">Conus radiatus</name>
    <name type="common">Rayed cone</name>
    <dbReference type="NCBI Taxonomy" id="61198"/>
    <lineage>
        <taxon>Eukaryota</taxon>
        <taxon>Metazoa</taxon>
        <taxon>Spiralia</taxon>
        <taxon>Lophotrochozoa</taxon>
        <taxon>Mollusca</taxon>
        <taxon>Gastropoda</taxon>
        <taxon>Caenogastropoda</taxon>
        <taxon>Neogastropoda</taxon>
        <taxon>Conoidea</taxon>
        <taxon>Conidae</taxon>
        <taxon>Conus</taxon>
        <taxon>Phasmoconus</taxon>
    </lineage>
</organism>
<sequence>GHVPCGKDGRKCGYHADCCNCCLSGICKPSTSWTGCSTSTFD</sequence>
<proteinExistence type="evidence at transcript level"/>
<evidence type="ECO:0000250" key="1"/>
<evidence type="ECO:0000250" key="2">
    <source>
        <dbReference type="UniProtKB" id="Q7Z094"/>
    </source>
</evidence>
<evidence type="ECO:0000305" key="3"/>
<reference key="1">
    <citation type="journal article" date="2003" name="J. Neurochem.">
        <title>Novel excitatory Conus peptides define a new conotoxin superfamily.</title>
        <authorList>
            <person name="Jimenez E.C."/>
            <person name="Shetty R.P."/>
            <person name="Lirazan M."/>
            <person name="Rivier J."/>
            <person name="Walker C."/>
            <person name="Abogadie F.C."/>
            <person name="Yoshikami D."/>
            <person name="Cruz L.J."/>
            <person name="Olivera B.M."/>
        </authorList>
    </citation>
    <scope>NUCLEOTIDE SEQUENCE [MRNA]</scope>
    <source>
        <tissue>Venom duct</tissue>
    </source>
</reference>
<protein>
    <recommendedName>
        <fullName>Iota-conotoxin-like R11.1</fullName>
    </recommendedName>
</protein>
<accession>Q7Z0A6</accession>
<comment type="function">
    <text evidence="1">Iota-conotoxins bind to voltage-gated sodium channels (Nav) and act as agonists by shifting the voltage-dependence of activation to more hyperpolarized levels. Produces general excitatory symptoms (By similarity).</text>
</comment>
<comment type="subcellular location">
    <subcellularLocation>
        <location evidence="1">Secreted</location>
    </subcellularLocation>
</comment>
<comment type="tissue specificity">
    <text>Expressed by the venom duct.</text>
</comment>
<comment type="domain">
    <text>The cysteine framework is XI (C-C-CC-CC-C-C).</text>
</comment>
<comment type="similarity">
    <text evidence="3">Belongs to the conotoxin I1 superfamily.</text>
</comment>
<feature type="chain" id="PRO_0000086867" description="Iota-conotoxin-like R11.1">
    <location>
        <begin position="1"/>
        <end position="42"/>
    </location>
</feature>
<feature type="disulfide bond" evidence="2">
    <location>
        <begin position="5"/>
        <end position="19"/>
    </location>
</feature>
<feature type="disulfide bond" evidence="2">
    <location>
        <begin position="12"/>
        <end position="22"/>
    </location>
</feature>
<feature type="disulfide bond" evidence="2">
    <location>
        <begin position="18"/>
        <end position="27"/>
    </location>
</feature>
<feature type="disulfide bond" evidence="2">
    <location>
        <begin position="21"/>
        <end position="36"/>
    </location>
</feature>